<accession>Q8C3Q9</accession>
<proteinExistence type="evidence at protein level"/>
<name>CASP9_MOUSE</name>
<sequence length="454" mass="49979">MDEADRQLLRRCRVRLVSELQVAELWDALLSRELFTRDMIEDIQQAGSGSRRDQARQLVTDLETRGRQALPLFISCLEDTGQGTLASLLQSGRQAAKQDPEAVKPLDHLVPVVLGPMGLTAKEQRVVKLDPSQPAVGNLTPVVLGPEELWPARLKPEVLRPETPRPVDIGSGGAHDVCVPGKIRGHADMAYTLDSDPCGHCLIINNVNFCPSSGLGTRTGSNLDRDKLEHRFRWLRFMVEVKNDLTAKKMVTALMEMAHRNHRALDCFVVVILSHGCQASHLQFPGAVYGTDGCSVSIEKIVNIFNGSGCPSLGGKPKLFFIQACGGEQKDHGFEVACTSSQGRTLDSDSEPDAVPYQEGPRPLDQLDAVSSLPTPSDILVSYSTFPGFVSWRDKKSGSWYIETLDGILEQWARSEDLQSLLLRVANAVSAKGTYKQIPGCFNFLRKKLFFKTS</sequence>
<comment type="function">
    <text evidence="2">Involved in the activation cascade of caspases responsible for apoptosis execution. Binding of caspase-9 to Apaf-1 leads to activation of the protease which then cleaves and activates effector caspases caspase-3 (CASP3) or caspase-7 (CASP7). Promotes DNA damage-induced apoptosis in a ABL1/c-Abl-dependent manner. Proteolytically cleaves poly(ADP-ribose) polymerase (PARP). Cleaves BIRC6 following inhibition of BIRC6-caspase binding by DIABLO/SMAC (By similarity).</text>
</comment>
<comment type="catalytic activity">
    <reaction evidence="2">
        <text>Strict requirement for an Asp residue at position P1 and with a marked preference for His at position P2. It has a preferred cleavage sequence of Leu-Gly-His-Asp-|-Xaa.</text>
        <dbReference type="EC" id="3.4.22.62"/>
    </reaction>
</comment>
<comment type="activity regulation">
    <text evidence="2">Inhibited by BIRC6; following inhibition of BIRC6-caspase binding by DIABLO/SMAC, BIRC6 is subjected to caspase cleavage, leading to an increase in active caspases.</text>
</comment>
<comment type="subunit">
    <text evidence="1 2">Heterotetramer that consists of two anti-parallel arranged heterodimers, each one formed by a 35 kDa (p35) and a 10 kDa (p10) subunit. Caspase-9 and APAF1 bind to each other via their respective NH2-terminal CED-3 homologous domains in the presence of cytochrome C and ATP. Interacts (inactive form) with EFHD2. Interacts with HAX1. Interacts with BIRC2/c-IAP1, XIAP/BIRC4, BIRC5/survivin, BIRC6/bruce and BIRC7/livin. Interacts with ABL1 (via SH3 domain); the interaction is direct and increased in the response of cells to genotoxic stress and ABL1/c-Abl activation (By similarity). Interacts with BCL2L10 (By similarity).</text>
</comment>
<comment type="PTM">
    <text evidence="2">Cleavages at Asp-353 by granzyme B and at Asp-368 by caspase-3 generate the two active subunits. Caspase-8 and -10 can also be involved in these processing events (By similarity).</text>
</comment>
<comment type="PTM">
    <text evidence="2 5">Phosphorylated at Thr-163 by MAPK1/ERK2. Phosphorylation at Thr-163 is sufficient to block caspase-9 processing and subsequent caspase-3 activation (By similarity). Phosphorylation on Tyr-191 by ABL1/c-Abl; occurs in the response of cells to DNA damage (PubMed:15657060).</text>
</comment>
<comment type="PTM">
    <text evidence="2">Ubiquitinated by BIRC6; this activity is inhibited by DIABLO/SMAC.</text>
</comment>
<comment type="similarity">
    <text evidence="6">Belongs to the peptidase C14A family.</text>
</comment>
<organism>
    <name type="scientific">Mus musculus</name>
    <name type="common">Mouse</name>
    <dbReference type="NCBI Taxonomy" id="10090"/>
    <lineage>
        <taxon>Eukaryota</taxon>
        <taxon>Metazoa</taxon>
        <taxon>Chordata</taxon>
        <taxon>Craniata</taxon>
        <taxon>Vertebrata</taxon>
        <taxon>Euteleostomi</taxon>
        <taxon>Mammalia</taxon>
        <taxon>Eutheria</taxon>
        <taxon>Euarchontoglires</taxon>
        <taxon>Glires</taxon>
        <taxon>Rodentia</taxon>
        <taxon>Myomorpha</taxon>
        <taxon>Muroidea</taxon>
        <taxon>Muridae</taxon>
        <taxon>Murinae</taxon>
        <taxon>Mus</taxon>
        <taxon>Mus</taxon>
    </lineage>
</organism>
<reference key="1">
    <citation type="journal article" date="2005" name="Science">
        <title>The transcriptional landscape of the mammalian genome.</title>
        <authorList>
            <person name="Carninci P."/>
            <person name="Kasukawa T."/>
            <person name="Katayama S."/>
            <person name="Gough J."/>
            <person name="Frith M.C."/>
            <person name="Maeda N."/>
            <person name="Oyama R."/>
            <person name="Ravasi T."/>
            <person name="Lenhard B."/>
            <person name="Wells C."/>
            <person name="Kodzius R."/>
            <person name="Shimokawa K."/>
            <person name="Bajic V.B."/>
            <person name="Brenner S.E."/>
            <person name="Batalov S."/>
            <person name="Forrest A.R."/>
            <person name="Zavolan M."/>
            <person name="Davis M.J."/>
            <person name="Wilming L.G."/>
            <person name="Aidinis V."/>
            <person name="Allen J.E."/>
            <person name="Ambesi-Impiombato A."/>
            <person name="Apweiler R."/>
            <person name="Aturaliya R.N."/>
            <person name="Bailey T.L."/>
            <person name="Bansal M."/>
            <person name="Baxter L."/>
            <person name="Beisel K.W."/>
            <person name="Bersano T."/>
            <person name="Bono H."/>
            <person name="Chalk A.M."/>
            <person name="Chiu K.P."/>
            <person name="Choudhary V."/>
            <person name="Christoffels A."/>
            <person name="Clutterbuck D.R."/>
            <person name="Crowe M.L."/>
            <person name="Dalla E."/>
            <person name="Dalrymple B.P."/>
            <person name="de Bono B."/>
            <person name="Della Gatta G."/>
            <person name="di Bernardo D."/>
            <person name="Down T."/>
            <person name="Engstrom P."/>
            <person name="Fagiolini M."/>
            <person name="Faulkner G."/>
            <person name="Fletcher C.F."/>
            <person name="Fukushima T."/>
            <person name="Furuno M."/>
            <person name="Futaki S."/>
            <person name="Gariboldi M."/>
            <person name="Georgii-Hemming P."/>
            <person name="Gingeras T.R."/>
            <person name="Gojobori T."/>
            <person name="Green R.E."/>
            <person name="Gustincich S."/>
            <person name="Harbers M."/>
            <person name="Hayashi Y."/>
            <person name="Hensch T.K."/>
            <person name="Hirokawa N."/>
            <person name="Hill D."/>
            <person name="Huminiecki L."/>
            <person name="Iacono M."/>
            <person name="Ikeo K."/>
            <person name="Iwama A."/>
            <person name="Ishikawa T."/>
            <person name="Jakt M."/>
            <person name="Kanapin A."/>
            <person name="Katoh M."/>
            <person name="Kawasawa Y."/>
            <person name="Kelso J."/>
            <person name="Kitamura H."/>
            <person name="Kitano H."/>
            <person name="Kollias G."/>
            <person name="Krishnan S.P."/>
            <person name="Kruger A."/>
            <person name="Kummerfeld S.K."/>
            <person name="Kurochkin I.V."/>
            <person name="Lareau L.F."/>
            <person name="Lazarevic D."/>
            <person name="Lipovich L."/>
            <person name="Liu J."/>
            <person name="Liuni S."/>
            <person name="McWilliam S."/>
            <person name="Madan Babu M."/>
            <person name="Madera M."/>
            <person name="Marchionni L."/>
            <person name="Matsuda H."/>
            <person name="Matsuzawa S."/>
            <person name="Miki H."/>
            <person name="Mignone F."/>
            <person name="Miyake S."/>
            <person name="Morris K."/>
            <person name="Mottagui-Tabar S."/>
            <person name="Mulder N."/>
            <person name="Nakano N."/>
            <person name="Nakauchi H."/>
            <person name="Ng P."/>
            <person name="Nilsson R."/>
            <person name="Nishiguchi S."/>
            <person name="Nishikawa S."/>
            <person name="Nori F."/>
            <person name="Ohara O."/>
            <person name="Okazaki Y."/>
            <person name="Orlando V."/>
            <person name="Pang K.C."/>
            <person name="Pavan W.J."/>
            <person name="Pavesi G."/>
            <person name="Pesole G."/>
            <person name="Petrovsky N."/>
            <person name="Piazza S."/>
            <person name="Reed J."/>
            <person name="Reid J.F."/>
            <person name="Ring B.Z."/>
            <person name="Ringwald M."/>
            <person name="Rost B."/>
            <person name="Ruan Y."/>
            <person name="Salzberg S.L."/>
            <person name="Sandelin A."/>
            <person name="Schneider C."/>
            <person name="Schoenbach C."/>
            <person name="Sekiguchi K."/>
            <person name="Semple C.A."/>
            <person name="Seno S."/>
            <person name="Sessa L."/>
            <person name="Sheng Y."/>
            <person name="Shibata Y."/>
            <person name="Shimada H."/>
            <person name="Shimada K."/>
            <person name="Silva D."/>
            <person name="Sinclair B."/>
            <person name="Sperling S."/>
            <person name="Stupka E."/>
            <person name="Sugiura K."/>
            <person name="Sultana R."/>
            <person name="Takenaka Y."/>
            <person name="Taki K."/>
            <person name="Tammoja K."/>
            <person name="Tan S.L."/>
            <person name="Tang S."/>
            <person name="Taylor M.S."/>
            <person name="Tegner J."/>
            <person name="Teichmann S.A."/>
            <person name="Ueda H.R."/>
            <person name="van Nimwegen E."/>
            <person name="Verardo R."/>
            <person name="Wei C.L."/>
            <person name="Yagi K."/>
            <person name="Yamanishi H."/>
            <person name="Zabarovsky E."/>
            <person name="Zhu S."/>
            <person name="Zimmer A."/>
            <person name="Hide W."/>
            <person name="Bult C."/>
            <person name="Grimmond S.M."/>
            <person name="Teasdale R.D."/>
            <person name="Liu E.T."/>
            <person name="Brusic V."/>
            <person name="Quackenbush J."/>
            <person name="Wahlestedt C."/>
            <person name="Mattick J.S."/>
            <person name="Hume D.A."/>
            <person name="Kai C."/>
            <person name="Sasaki D."/>
            <person name="Tomaru Y."/>
            <person name="Fukuda S."/>
            <person name="Kanamori-Katayama M."/>
            <person name="Suzuki M."/>
            <person name="Aoki J."/>
            <person name="Arakawa T."/>
            <person name="Iida J."/>
            <person name="Imamura K."/>
            <person name="Itoh M."/>
            <person name="Kato T."/>
            <person name="Kawaji H."/>
            <person name="Kawagashira N."/>
            <person name="Kawashima T."/>
            <person name="Kojima M."/>
            <person name="Kondo S."/>
            <person name="Konno H."/>
            <person name="Nakano K."/>
            <person name="Ninomiya N."/>
            <person name="Nishio T."/>
            <person name="Okada M."/>
            <person name="Plessy C."/>
            <person name="Shibata K."/>
            <person name="Shiraki T."/>
            <person name="Suzuki S."/>
            <person name="Tagami M."/>
            <person name="Waki K."/>
            <person name="Watahiki A."/>
            <person name="Okamura-Oho Y."/>
            <person name="Suzuki H."/>
            <person name="Kawai J."/>
            <person name="Hayashizaki Y."/>
        </authorList>
    </citation>
    <scope>NUCLEOTIDE SEQUENCE [LARGE SCALE MRNA]</scope>
    <source>
        <strain>C57BL/6J</strain>
        <tissue>Lung</tissue>
    </source>
</reference>
<reference key="2">
    <citation type="journal article" date="2009" name="PLoS Biol.">
        <title>Lineage-specific biology revealed by a finished genome assembly of the mouse.</title>
        <authorList>
            <person name="Church D.M."/>
            <person name="Goodstadt L."/>
            <person name="Hillier L.W."/>
            <person name="Zody M.C."/>
            <person name="Goldstein S."/>
            <person name="She X."/>
            <person name="Bult C.J."/>
            <person name="Agarwala R."/>
            <person name="Cherry J.L."/>
            <person name="DiCuccio M."/>
            <person name="Hlavina W."/>
            <person name="Kapustin Y."/>
            <person name="Meric P."/>
            <person name="Maglott D."/>
            <person name="Birtle Z."/>
            <person name="Marques A.C."/>
            <person name="Graves T."/>
            <person name="Zhou S."/>
            <person name="Teague B."/>
            <person name="Potamousis K."/>
            <person name="Churas C."/>
            <person name="Place M."/>
            <person name="Herschleb J."/>
            <person name="Runnheim R."/>
            <person name="Forrest D."/>
            <person name="Amos-Landgraf J."/>
            <person name="Schwartz D.C."/>
            <person name="Cheng Z."/>
            <person name="Lindblad-Toh K."/>
            <person name="Eichler E.E."/>
            <person name="Ponting C.P."/>
        </authorList>
    </citation>
    <scope>NUCLEOTIDE SEQUENCE [LARGE SCALE GENOMIC DNA]</scope>
    <source>
        <strain>C57BL/6J</strain>
    </source>
</reference>
<reference key="3">
    <citation type="submission" date="2005-07" db="EMBL/GenBank/DDBJ databases">
        <authorList>
            <person name="Mural R.J."/>
            <person name="Adams M.D."/>
            <person name="Myers E.W."/>
            <person name="Smith H.O."/>
            <person name="Venter J.C."/>
        </authorList>
    </citation>
    <scope>NUCLEOTIDE SEQUENCE [LARGE SCALE GENOMIC DNA]</scope>
</reference>
<reference key="4">
    <citation type="journal article" date="2004" name="Genome Res.">
        <title>The status, quality, and expansion of the NIH full-length cDNA project: the Mammalian Gene Collection (MGC).</title>
        <authorList>
            <consortium name="The MGC Project Team"/>
        </authorList>
    </citation>
    <scope>NUCLEOTIDE SEQUENCE [LARGE SCALE MRNA]</scope>
    <source>
        <strain>C57BL/6J</strain>
        <tissue>Brain</tissue>
    </source>
</reference>
<reference key="5">
    <citation type="journal article" date="2005" name="J. Biol. Chem.">
        <title>c-Abl tyrosine kinase regulates caspase-9 autocleavage in the apoptotic response to DNA damage.</title>
        <authorList>
            <person name="Raina D."/>
            <person name="Pandey P."/>
            <person name="Ahmad R."/>
            <person name="Bharti A."/>
            <person name="Ren J."/>
            <person name="Kharbanda S."/>
            <person name="Weichselbaum R."/>
            <person name="Kufe D."/>
        </authorList>
    </citation>
    <scope>PHOSPHORYLATION AT TYR-191 BY ABL1</scope>
</reference>
<feature type="propeptide" id="PRO_0000421172" evidence="3">
    <location>
        <begin position="1"/>
        <end status="unknown"/>
    </location>
</feature>
<feature type="chain" id="PRO_0000421173" description="Caspase-9 subunit p35" evidence="1">
    <location>
        <begin status="unknown"/>
        <end position="353"/>
    </location>
</feature>
<feature type="propeptide" id="PRO_0000421174" evidence="1">
    <location>
        <begin position="354"/>
        <end position="367"/>
    </location>
</feature>
<feature type="chain" id="PRO_0000421175" description="Caspase-9 subunit p10" evidence="1">
    <location>
        <begin position="368"/>
        <end position="454"/>
    </location>
</feature>
<feature type="domain" description="CARD" evidence="4">
    <location>
        <begin position="1"/>
        <end position="92"/>
    </location>
</feature>
<feature type="active site" evidence="1">
    <location>
        <position position="275"/>
    </location>
</feature>
<feature type="active site" evidence="1">
    <location>
        <position position="325"/>
    </location>
</feature>
<feature type="modified residue" description="Phosphothreonine; by MAPK1" evidence="2">
    <location>
        <position position="163"/>
    </location>
</feature>
<feature type="modified residue" description="Phosphotyrosine; by ABL1" evidence="5">
    <location>
        <position position="191"/>
    </location>
</feature>
<feature type="modified residue" description="Phosphoserine" evidence="2">
    <location>
        <position position="340"/>
    </location>
</feature>
<feature type="modified residue" description="Phosphoserine" evidence="2">
    <location>
        <position position="348"/>
    </location>
</feature>
<keyword id="KW-0053">Apoptosis</keyword>
<keyword id="KW-0378">Hydrolase</keyword>
<keyword id="KW-0597">Phosphoprotein</keyword>
<keyword id="KW-0645">Protease</keyword>
<keyword id="KW-1185">Reference proteome</keyword>
<keyword id="KW-0788">Thiol protease</keyword>
<keyword id="KW-0832">Ubl conjugation</keyword>
<keyword id="KW-0865">Zymogen</keyword>
<evidence type="ECO:0000250" key="1"/>
<evidence type="ECO:0000250" key="2">
    <source>
        <dbReference type="UniProtKB" id="P55211"/>
    </source>
</evidence>
<evidence type="ECO:0000255" key="3"/>
<evidence type="ECO:0000255" key="4">
    <source>
        <dbReference type="PROSITE-ProRule" id="PRU00046"/>
    </source>
</evidence>
<evidence type="ECO:0000269" key="5">
    <source>
    </source>
</evidence>
<evidence type="ECO:0000305" key="6"/>
<protein>
    <recommendedName>
        <fullName>Caspase-9</fullName>
        <shortName>CASP-9</shortName>
        <ecNumber>3.4.22.62</ecNumber>
    </recommendedName>
    <alternativeName>
        <fullName>Apoptotic protease Mch-6</fullName>
    </alternativeName>
    <alternativeName>
        <fullName>Apoptotic protease-activating factor 3</fullName>
        <shortName>APAF-3</shortName>
    </alternativeName>
    <alternativeName>
        <fullName>ICE-like apoptotic protease 6</fullName>
        <shortName>ICE-LAP6</shortName>
    </alternativeName>
    <component>
        <recommendedName>
            <fullName>Caspase-9 subunit p35</fullName>
        </recommendedName>
    </component>
    <component>
        <recommendedName>
            <fullName>Caspase-9 subunit p10</fullName>
        </recommendedName>
    </component>
</protein>
<dbReference type="EC" id="3.4.22.62"/>
<dbReference type="EMBL" id="AK085095">
    <property type="protein sequence ID" value="BAC39365.1"/>
    <property type="molecule type" value="mRNA"/>
</dbReference>
<dbReference type="EMBL" id="AL928577">
    <property type="status" value="NOT_ANNOTATED_CDS"/>
    <property type="molecule type" value="Genomic_DNA"/>
</dbReference>
<dbReference type="EMBL" id="CH466615">
    <property type="protein sequence ID" value="EDL13399.1"/>
    <property type="molecule type" value="Genomic_DNA"/>
</dbReference>
<dbReference type="EMBL" id="BC056372">
    <property type="protein sequence ID" value="AAH56372.1"/>
    <property type="molecule type" value="mRNA"/>
</dbReference>
<dbReference type="EMBL" id="BC056447">
    <property type="protein sequence ID" value="AAH56447.1"/>
    <property type="molecule type" value="mRNA"/>
</dbReference>
<dbReference type="CCDS" id="CCDS18883.1"/>
<dbReference type="RefSeq" id="NP_056548.2">
    <property type="nucleotide sequence ID" value="NM_015733.5"/>
</dbReference>
<dbReference type="SMR" id="Q8C3Q9"/>
<dbReference type="BioGRID" id="198501">
    <property type="interactions" value="7"/>
</dbReference>
<dbReference type="ComplexPortal" id="CPX-3801">
    <property type="entry name" value="Caspase-9 complex"/>
</dbReference>
<dbReference type="ComplexPortal" id="CPX-3824">
    <property type="entry name" value="Apoptosome"/>
</dbReference>
<dbReference type="DIP" id="DIP-60482N"/>
<dbReference type="FunCoup" id="Q8C3Q9">
    <property type="interactions" value="2723"/>
</dbReference>
<dbReference type="IntAct" id="Q8C3Q9">
    <property type="interactions" value="1"/>
</dbReference>
<dbReference type="STRING" id="10090.ENSMUSP00000030747"/>
<dbReference type="MEROPS" id="C14.010"/>
<dbReference type="GlyGen" id="Q8C3Q9">
    <property type="glycosylation" value="2 sites, 1 O-linked glycan (1 site)"/>
</dbReference>
<dbReference type="iPTMnet" id="Q8C3Q9"/>
<dbReference type="PhosphoSitePlus" id="Q8C3Q9"/>
<dbReference type="PaxDb" id="10090-ENSMUSP00000030747"/>
<dbReference type="ProteomicsDB" id="279915"/>
<dbReference type="Pumba" id="Q8C3Q9"/>
<dbReference type="Antibodypedia" id="749">
    <property type="antibodies" value="1884 antibodies from 51 providers"/>
</dbReference>
<dbReference type="DNASU" id="12371"/>
<dbReference type="Ensembl" id="ENSMUST00000030747.11">
    <property type="protein sequence ID" value="ENSMUSP00000030747.5"/>
    <property type="gene ID" value="ENSMUSG00000028914.14"/>
</dbReference>
<dbReference type="GeneID" id="12371"/>
<dbReference type="KEGG" id="mmu:12371"/>
<dbReference type="UCSC" id="uc008vpi.2">
    <property type="organism name" value="mouse"/>
</dbReference>
<dbReference type="AGR" id="MGI:1277950"/>
<dbReference type="CTD" id="842"/>
<dbReference type="MGI" id="MGI:1277950">
    <property type="gene designation" value="Casp9"/>
</dbReference>
<dbReference type="VEuPathDB" id="HostDB:ENSMUSG00000028914"/>
<dbReference type="eggNOG" id="KOG3573">
    <property type="taxonomic scope" value="Eukaryota"/>
</dbReference>
<dbReference type="GeneTree" id="ENSGT00940000159698"/>
<dbReference type="HOGENOM" id="CLU_036904_5_0_1"/>
<dbReference type="InParanoid" id="Q8C3Q9"/>
<dbReference type="OMA" id="PFQEGPV"/>
<dbReference type="OrthoDB" id="6044770at2759"/>
<dbReference type="PhylomeDB" id="Q8C3Q9"/>
<dbReference type="TreeFam" id="TF102023"/>
<dbReference type="Reactome" id="R-MMU-111458">
    <property type="pathway name" value="Formation of apoptosome"/>
</dbReference>
<dbReference type="Reactome" id="R-MMU-111459">
    <property type="pathway name" value="Activation of caspases through apoptosome-mediated cleavage"/>
</dbReference>
<dbReference type="Reactome" id="R-MMU-168638">
    <property type="pathway name" value="NOD1/2 Signaling Pathway"/>
</dbReference>
<dbReference type="Reactome" id="R-MMU-198323">
    <property type="pathway name" value="AKT phosphorylates targets in the cytosol"/>
</dbReference>
<dbReference type="Reactome" id="R-MMU-418889">
    <property type="pathway name" value="Caspase activation via Dependence Receptors in the absence of ligand"/>
</dbReference>
<dbReference type="Reactome" id="R-MMU-9627069">
    <property type="pathway name" value="Regulation of the apoptosome activity"/>
</dbReference>
<dbReference type="BioGRID-ORCS" id="12371">
    <property type="hits" value="2 hits in 81 CRISPR screens"/>
</dbReference>
<dbReference type="ChiTaRS" id="Casp9">
    <property type="organism name" value="mouse"/>
</dbReference>
<dbReference type="PRO" id="PR:Q8C3Q9"/>
<dbReference type="Proteomes" id="UP000000589">
    <property type="component" value="Chromosome 4"/>
</dbReference>
<dbReference type="RNAct" id="Q8C3Q9">
    <property type="molecule type" value="protein"/>
</dbReference>
<dbReference type="Bgee" id="ENSMUSG00000028914">
    <property type="expression patterns" value="Expressed in metanephric mesenchyme and 265 other cell types or tissues"/>
</dbReference>
<dbReference type="ExpressionAtlas" id="Q8C3Q9">
    <property type="expression patterns" value="baseline and differential"/>
</dbReference>
<dbReference type="GO" id="GO:0043293">
    <property type="term" value="C:apoptosome"/>
    <property type="evidence" value="ECO:0007669"/>
    <property type="project" value="Ensembl"/>
</dbReference>
<dbReference type="GO" id="GO:0008303">
    <property type="term" value="C:caspase complex"/>
    <property type="evidence" value="ECO:0007669"/>
    <property type="project" value="Ensembl"/>
</dbReference>
<dbReference type="GO" id="GO:0005829">
    <property type="term" value="C:cytosol"/>
    <property type="evidence" value="ECO:0000314"/>
    <property type="project" value="MGI"/>
</dbReference>
<dbReference type="GO" id="GO:0005739">
    <property type="term" value="C:mitochondrion"/>
    <property type="evidence" value="ECO:0007669"/>
    <property type="project" value="Ensembl"/>
</dbReference>
<dbReference type="GO" id="GO:0005634">
    <property type="term" value="C:nucleus"/>
    <property type="evidence" value="ECO:0000314"/>
    <property type="project" value="MGI"/>
</dbReference>
<dbReference type="GO" id="GO:0004197">
    <property type="term" value="F:cysteine-type endopeptidase activity"/>
    <property type="evidence" value="ECO:0000314"/>
    <property type="project" value="MGI"/>
</dbReference>
<dbReference type="GO" id="GO:0008233">
    <property type="term" value="F:peptidase activity"/>
    <property type="evidence" value="ECO:0000314"/>
    <property type="project" value="MGI"/>
</dbReference>
<dbReference type="GO" id="GO:0019901">
    <property type="term" value="F:protein kinase binding"/>
    <property type="evidence" value="ECO:0000250"/>
    <property type="project" value="UniProtKB"/>
</dbReference>
<dbReference type="GO" id="GO:0017124">
    <property type="term" value="F:SH3 domain binding"/>
    <property type="evidence" value="ECO:0000250"/>
    <property type="project" value="UniProtKB"/>
</dbReference>
<dbReference type="GO" id="GO:0006915">
    <property type="term" value="P:apoptotic process"/>
    <property type="evidence" value="ECO:0000315"/>
    <property type="project" value="MGI"/>
</dbReference>
<dbReference type="GO" id="GO:0071549">
    <property type="term" value="P:cellular response to dexamethasone stimulus"/>
    <property type="evidence" value="ECO:0000314"/>
    <property type="project" value="UniProtKB"/>
</dbReference>
<dbReference type="GO" id="GO:0034644">
    <property type="term" value="P:cellular response to UV"/>
    <property type="evidence" value="ECO:0000250"/>
    <property type="project" value="UniProtKB"/>
</dbReference>
<dbReference type="GO" id="GO:0006974">
    <property type="term" value="P:DNA damage response"/>
    <property type="evidence" value="ECO:0000315"/>
    <property type="project" value="MGI"/>
</dbReference>
<dbReference type="GO" id="GO:1904019">
    <property type="term" value="P:epithelial cell apoptotic process"/>
    <property type="evidence" value="ECO:0000314"/>
    <property type="project" value="MGI"/>
</dbReference>
<dbReference type="GO" id="GO:0044346">
    <property type="term" value="P:fibroblast apoptotic process"/>
    <property type="evidence" value="ECO:0000314"/>
    <property type="project" value="MGI"/>
</dbReference>
<dbReference type="GO" id="GO:0034349">
    <property type="term" value="P:glial cell apoptotic process"/>
    <property type="evidence" value="ECO:0007669"/>
    <property type="project" value="Ensembl"/>
</dbReference>
<dbReference type="GO" id="GO:0008630">
    <property type="term" value="P:intrinsic apoptotic signaling pathway in response to DNA damage"/>
    <property type="evidence" value="ECO:0000250"/>
    <property type="project" value="UniProtKB"/>
</dbReference>
<dbReference type="GO" id="GO:0070059">
    <property type="term" value="P:intrinsic apoptotic signaling pathway in response to endoplasmic reticulum stress"/>
    <property type="evidence" value="ECO:0000303"/>
    <property type="project" value="ParkinsonsUK-UCL"/>
</dbReference>
<dbReference type="GO" id="GO:0001822">
    <property type="term" value="P:kidney development"/>
    <property type="evidence" value="ECO:0007669"/>
    <property type="project" value="Ensembl"/>
</dbReference>
<dbReference type="GO" id="GO:0071887">
    <property type="term" value="P:leukocyte apoptotic process"/>
    <property type="evidence" value="ECO:0007669"/>
    <property type="project" value="Ensembl"/>
</dbReference>
<dbReference type="GO" id="GO:0051402">
    <property type="term" value="P:neuron apoptotic process"/>
    <property type="evidence" value="ECO:0000315"/>
    <property type="project" value="MGI"/>
</dbReference>
<dbReference type="GO" id="GO:1900119">
    <property type="term" value="P:positive regulation of execution phase of apoptosis"/>
    <property type="evidence" value="ECO:0007669"/>
    <property type="project" value="Ensembl"/>
</dbReference>
<dbReference type="GO" id="GO:0043525">
    <property type="term" value="P:positive regulation of neuron apoptotic process"/>
    <property type="evidence" value="ECO:0000315"/>
    <property type="project" value="MGI"/>
</dbReference>
<dbReference type="GO" id="GO:0016485">
    <property type="term" value="P:protein processing"/>
    <property type="evidence" value="ECO:0007669"/>
    <property type="project" value="Ensembl"/>
</dbReference>
<dbReference type="GO" id="GO:0072347">
    <property type="term" value="P:response to anesthetic"/>
    <property type="evidence" value="ECO:0007669"/>
    <property type="project" value="Ensembl"/>
</dbReference>
<dbReference type="GO" id="GO:0032025">
    <property type="term" value="P:response to cobalt ion"/>
    <property type="evidence" value="ECO:0007669"/>
    <property type="project" value="Ensembl"/>
</dbReference>
<dbReference type="GO" id="GO:0032355">
    <property type="term" value="P:response to estradiol"/>
    <property type="evidence" value="ECO:0007669"/>
    <property type="project" value="Ensembl"/>
</dbReference>
<dbReference type="GO" id="GO:0001666">
    <property type="term" value="P:response to hypoxia"/>
    <property type="evidence" value="ECO:0007669"/>
    <property type="project" value="Ensembl"/>
</dbReference>
<dbReference type="GO" id="GO:0002931">
    <property type="term" value="P:response to ischemia"/>
    <property type="evidence" value="ECO:0007669"/>
    <property type="project" value="Ensembl"/>
</dbReference>
<dbReference type="GO" id="GO:0032496">
    <property type="term" value="P:response to lipopolysaccharide"/>
    <property type="evidence" value="ECO:0007669"/>
    <property type="project" value="Ensembl"/>
</dbReference>
<dbReference type="GO" id="GO:0009411">
    <property type="term" value="P:response to UV"/>
    <property type="evidence" value="ECO:0000315"/>
    <property type="project" value="MGI"/>
</dbReference>
<dbReference type="GO" id="GO:0042770">
    <property type="term" value="P:signal transduction in response to DNA damage"/>
    <property type="evidence" value="ECO:0000250"/>
    <property type="project" value="UniProtKB"/>
</dbReference>
<dbReference type="CDD" id="cd08326">
    <property type="entry name" value="CARD_CASP9"/>
    <property type="match status" value="1"/>
</dbReference>
<dbReference type="CDD" id="cd00032">
    <property type="entry name" value="CASc"/>
    <property type="match status" value="1"/>
</dbReference>
<dbReference type="FunFam" id="1.10.533.10:FF:000041">
    <property type="entry name" value="Caspase 9"/>
    <property type="match status" value="1"/>
</dbReference>
<dbReference type="FunFam" id="3.40.50.1460:FF:000012">
    <property type="entry name" value="Caspase 9"/>
    <property type="match status" value="1"/>
</dbReference>
<dbReference type="Gene3D" id="3.40.50.1460">
    <property type="match status" value="1"/>
</dbReference>
<dbReference type="Gene3D" id="1.10.533.10">
    <property type="entry name" value="Death Domain, Fas"/>
    <property type="match status" value="1"/>
</dbReference>
<dbReference type="InterPro" id="IPR001315">
    <property type="entry name" value="CARD"/>
</dbReference>
<dbReference type="InterPro" id="IPR042147">
    <property type="entry name" value="CARD_CASP9"/>
</dbReference>
<dbReference type="InterPro" id="IPR029030">
    <property type="entry name" value="Caspase-like_dom_sf"/>
</dbReference>
<dbReference type="InterPro" id="IPR033139">
    <property type="entry name" value="Caspase_cys_AS"/>
</dbReference>
<dbReference type="InterPro" id="IPR016129">
    <property type="entry name" value="Caspase_his_AS"/>
</dbReference>
<dbReference type="InterPro" id="IPR011029">
    <property type="entry name" value="DEATH-like_dom_sf"/>
</dbReference>
<dbReference type="InterPro" id="IPR002398">
    <property type="entry name" value="Pept_C14"/>
</dbReference>
<dbReference type="InterPro" id="IPR011600">
    <property type="entry name" value="Pept_C14_caspase"/>
</dbReference>
<dbReference type="InterPro" id="IPR002138">
    <property type="entry name" value="Pept_C14_p10"/>
</dbReference>
<dbReference type="InterPro" id="IPR001309">
    <property type="entry name" value="Pept_C14_p20"/>
</dbReference>
<dbReference type="InterPro" id="IPR015917">
    <property type="entry name" value="Pept_C14A"/>
</dbReference>
<dbReference type="PANTHER" id="PTHR47901">
    <property type="entry name" value="CASPASE RECRUITMENT DOMAIN-CONTAINING PROTEIN 18"/>
    <property type="match status" value="1"/>
</dbReference>
<dbReference type="PANTHER" id="PTHR47901:SF8">
    <property type="entry name" value="CASPASE-3"/>
    <property type="match status" value="1"/>
</dbReference>
<dbReference type="Pfam" id="PF00619">
    <property type="entry name" value="CARD"/>
    <property type="match status" value="1"/>
</dbReference>
<dbReference type="Pfam" id="PF00656">
    <property type="entry name" value="Peptidase_C14"/>
    <property type="match status" value="1"/>
</dbReference>
<dbReference type="PIRSF" id="PIRSF038001">
    <property type="entry name" value="Caspase_ICE"/>
    <property type="match status" value="1"/>
</dbReference>
<dbReference type="PRINTS" id="PR00376">
    <property type="entry name" value="IL1BCENZYME"/>
</dbReference>
<dbReference type="SMART" id="SM00114">
    <property type="entry name" value="CARD"/>
    <property type="match status" value="1"/>
</dbReference>
<dbReference type="SMART" id="SM00115">
    <property type="entry name" value="CASc"/>
    <property type="match status" value="1"/>
</dbReference>
<dbReference type="SUPFAM" id="SSF52129">
    <property type="entry name" value="Caspase-like"/>
    <property type="match status" value="1"/>
</dbReference>
<dbReference type="SUPFAM" id="SSF47986">
    <property type="entry name" value="DEATH domain"/>
    <property type="match status" value="1"/>
</dbReference>
<dbReference type="PROSITE" id="PS50209">
    <property type="entry name" value="CARD"/>
    <property type="match status" value="1"/>
</dbReference>
<dbReference type="PROSITE" id="PS01122">
    <property type="entry name" value="CASPASE_CYS"/>
    <property type="match status" value="1"/>
</dbReference>
<dbReference type="PROSITE" id="PS01121">
    <property type="entry name" value="CASPASE_HIS"/>
    <property type="match status" value="1"/>
</dbReference>
<dbReference type="PROSITE" id="PS50207">
    <property type="entry name" value="CASPASE_P10"/>
    <property type="match status" value="1"/>
</dbReference>
<dbReference type="PROSITE" id="PS50208">
    <property type="entry name" value="CASPASE_P20"/>
    <property type="match status" value="1"/>
</dbReference>
<gene>
    <name type="primary">Casp9</name>
    <name type="synonym">Mch6</name>
</gene>